<comment type="function">
    <text evidence="1">This protein binds specifically to 23S rRNA; its binding is stimulated by other ribosomal proteins, e.g. L4, L17, and L20. It is important during the early stages of 50S assembly. It makes multiple contacts with different domains of the 23S rRNA in the assembled 50S subunit and ribosome (By similarity).</text>
</comment>
<comment type="function">
    <text evidence="1">The globular domain of the protein is located near the polypeptide exit tunnel on the outside of the subunit, while an extended beta-hairpin is found that lines the wall of the exit tunnel in the center of the 70S ribosome.</text>
</comment>
<comment type="subunit">
    <text evidence="1">Part of the 50S ribosomal subunit.</text>
</comment>
<comment type="similarity">
    <text evidence="1">Belongs to the universal ribosomal protein uL22 family.</text>
</comment>
<reference key="1">
    <citation type="journal article" date="2004" name="Nat. Genet.">
        <title>Evidence in the Legionella pneumophila genome for exploitation of host cell functions and high genome plasticity.</title>
        <authorList>
            <person name="Cazalet C."/>
            <person name="Rusniok C."/>
            <person name="Brueggemann H."/>
            <person name="Zidane N."/>
            <person name="Magnier A."/>
            <person name="Ma L."/>
            <person name="Tichit M."/>
            <person name="Jarraud S."/>
            <person name="Bouchier C."/>
            <person name="Vandenesch F."/>
            <person name="Kunst F."/>
            <person name="Etienne J."/>
            <person name="Glaser P."/>
            <person name="Buchrieser C."/>
        </authorList>
    </citation>
    <scope>NUCLEOTIDE SEQUENCE [LARGE SCALE GENOMIC DNA]</scope>
    <source>
        <strain>Paris</strain>
    </source>
</reference>
<dbReference type="EMBL" id="CR628336">
    <property type="protein sequence ID" value="CAH11547.1"/>
    <property type="molecule type" value="Genomic_DNA"/>
</dbReference>
<dbReference type="RefSeq" id="WP_010946083.1">
    <property type="nucleotide sequence ID" value="NC_006368.1"/>
</dbReference>
<dbReference type="SMR" id="Q5X854"/>
<dbReference type="GeneID" id="57034337"/>
<dbReference type="KEGG" id="lpp:lpp0399"/>
<dbReference type="LegioList" id="lpp0399"/>
<dbReference type="HOGENOM" id="CLU_083987_3_3_6"/>
<dbReference type="GO" id="GO:0022625">
    <property type="term" value="C:cytosolic large ribosomal subunit"/>
    <property type="evidence" value="ECO:0007669"/>
    <property type="project" value="TreeGrafter"/>
</dbReference>
<dbReference type="GO" id="GO:0019843">
    <property type="term" value="F:rRNA binding"/>
    <property type="evidence" value="ECO:0007669"/>
    <property type="project" value="UniProtKB-UniRule"/>
</dbReference>
<dbReference type="GO" id="GO:0003735">
    <property type="term" value="F:structural constituent of ribosome"/>
    <property type="evidence" value="ECO:0007669"/>
    <property type="project" value="InterPro"/>
</dbReference>
<dbReference type="GO" id="GO:0006412">
    <property type="term" value="P:translation"/>
    <property type="evidence" value="ECO:0007669"/>
    <property type="project" value="UniProtKB-UniRule"/>
</dbReference>
<dbReference type="CDD" id="cd00336">
    <property type="entry name" value="Ribosomal_L22"/>
    <property type="match status" value="1"/>
</dbReference>
<dbReference type="Gene3D" id="3.90.470.10">
    <property type="entry name" value="Ribosomal protein L22/L17"/>
    <property type="match status" value="1"/>
</dbReference>
<dbReference type="HAMAP" id="MF_01331_B">
    <property type="entry name" value="Ribosomal_uL22_B"/>
    <property type="match status" value="1"/>
</dbReference>
<dbReference type="InterPro" id="IPR001063">
    <property type="entry name" value="Ribosomal_uL22"/>
</dbReference>
<dbReference type="InterPro" id="IPR005727">
    <property type="entry name" value="Ribosomal_uL22_bac/chlpt-type"/>
</dbReference>
<dbReference type="InterPro" id="IPR047867">
    <property type="entry name" value="Ribosomal_uL22_bac/org-type"/>
</dbReference>
<dbReference type="InterPro" id="IPR018260">
    <property type="entry name" value="Ribosomal_uL22_CS"/>
</dbReference>
<dbReference type="InterPro" id="IPR036394">
    <property type="entry name" value="Ribosomal_uL22_sf"/>
</dbReference>
<dbReference type="NCBIfam" id="TIGR01044">
    <property type="entry name" value="rplV_bact"/>
    <property type="match status" value="1"/>
</dbReference>
<dbReference type="PANTHER" id="PTHR13501">
    <property type="entry name" value="CHLOROPLAST 50S RIBOSOMAL PROTEIN L22-RELATED"/>
    <property type="match status" value="1"/>
</dbReference>
<dbReference type="PANTHER" id="PTHR13501:SF8">
    <property type="entry name" value="LARGE RIBOSOMAL SUBUNIT PROTEIN UL22M"/>
    <property type="match status" value="1"/>
</dbReference>
<dbReference type="Pfam" id="PF00237">
    <property type="entry name" value="Ribosomal_L22"/>
    <property type="match status" value="1"/>
</dbReference>
<dbReference type="SUPFAM" id="SSF54843">
    <property type="entry name" value="Ribosomal protein L22"/>
    <property type="match status" value="1"/>
</dbReference>
<dbReference type="PROSITE" id="PS00464">
    <property type="entry name" value="RIBOSOMAL_L22"/>
    <property type="match status" value="1"/>
</dbReference>
<name>RL22_LEGPA</name>
<keyword id="KW-0687">Ribonucleoprotein</keyword>
<keyword id="KW-0689">Ribosomal protein</keyword>
<keyword id="KW-0694">RNA-binding</keyword>
<keyword id="KW-0699">rRNA-binding</keyword>
<sequence length="111" mass="12021">MEVTAKLKGAPLSAQKGRLVADMIRNMNVSGALDVLKFTPKKGAKLMLKLLESAIANAENNNGADIDDLKVGMVCVDEATTLKRISPRAKGRANRICKRTCHITIKVSDEE</sequence>
<organism>
    <name type="scientific">Legionella pneumophila (strain Paris)</name>
    <dbReference type="NCBI Taxonomy" id="297246"/>
    <lineage>
        <taxon>Bacteria</taxon>
        <taxon>Pseudomonadati</taxon>
        <taxon>Pseudomonadota</taxon>
        <taxon>Gammaproteobacteria</taxon>
        <taxon>Legionellales</taxon>
        <taxon>Legionellaceae</taxon>
        <taxon>Legionella</taxon>
    </lineage>
</organism>
<feature type="chain" id="PRO_0000243162" description="Large ribosomal subunit protein uL22">
    <location>
        <begin position="1"/>
        <end position="111"/>
    </location>
</feature>
<accession>Q5X854</accession>
<proteinExistence type="inferred from homology"/>
<gene>
    <name evidence="1" type="primary">rplV</name>
    <name type="ordered locus">lpp0399</name>
</gene>
<evidence type="ECO:0000255" key="1">
    <source>
        <dbReference type="HAMAP-Rule" id="MF_01331"/>
    </source>
</evidence>
<evidence type="ECO:0000305" key="2"/>
<protein>
    <recommendedName>
        <fullName evidence="1">Large ribosomal subunit protein uL22</fullName>
    </recommendedName>
    <alternativeName>
        <fullName evidence="2">50S ribosomal protein L22</fullName>
    </alternativeName>
</protein>